<dbReference type="EMBL" id="CP000127">
    <property type="protein sequence ID" value="ABA58778.1"/>
    <property type="molecule type" value="Genomic_DNA"/>
</dbReference>
<dbReference type="RefSeq" id="WP_011330926.1">
    <property type="nucleotide sequence ID" value="NC_007484.1"/>
</dbReference>
<dbReference type="SMR" id="Q3J8R8"/>
<dbReference type="FunCoup" id="Q3J8R8">
    <property type="interactions" value="553"/>
</dbReference>
<dbReference type="STRING" id="323261.Noc_2320"/>
<dbReference type="KEGG" id="noc:Noc_2320"/>
<dbReference type="eggNOG" id="COG0185">
    <property type="taxonomic scope" value="Bacteria"/>
</dbReference>
<dbReference type="HOGENOM" id="CLU_144911_0_1_6"/>
<dbReference type="InParanoid" id="Q3J8R8"/>
<dbReference type="Proteomes" id="UP000006838">
    <property type="component" value="Chromosome"/>
</dbReference>
<dbReference type="GO" id="GO:0005737">
    <property type="term" value="C:cytoplasm"/>
    <property type="evidence" value="ECO:0007669"/>
    <property type="project" value="UniProtKB-ARBA"/>
</dbReference>
<dbReference type="GO" id="GO:0015935">
    <property type="term" value="C:small ribosomal subunit"/>
    <property type="evidence" value="ECO:0007669"/>
    <property type="project" value="InterPro"/>
</dbReference>
<dbReference type="GO" id="GO:0019843">
    <property type="term" value="F:rRNA binding"/>
    <property type="evidence" value="ECO:0007669"/>
    <property type="project" value="UniProtKB-UniRule"/>
</dbReference>
<dbReference type="GO" id="GO:0003735">
    <property type="term" value="F:structural constituent of ribosome"/>
    <property type="evidence" value="ECO:0007669"/>
    <property type="project" value="InterPro"/>
</dbReference>
<dbReference type="GO" id="GO:0000028">
    <property type="term" value="P:ribosomal small subunit assembly"/>
    <property type="evidence" value="ECO:0007669"/>
    <property type="project" value="TreeGrafter"/>
</dbReference>
<dbReference type="GO" id="GO:0006412">
    <property type="term" value="P:translation"/>
    <property type="evidence" value="ECO:0007669"/>
    <property type="project" value="UniProtKB-UniRule"/>
</dbReference>
<dbReference type="FunFam" id="3.30.860.10:FF:000001">
    <property type="entry name" value="30S ribosomal protein S19"/>
    <property type="match status" value="1"/>
</dbReference>
<dbReference type="Gene3D" id="3.30.860.10">
    <property type="entry name" value="30s Ribosomal Protein S19, Chain A"/>
    <property type="match status" value="1"/>
</dbReference>
<dbReference type="HAMAP" id="MF_00531">
    <property type="entry name" value="Ribosomal_uS19"/>
    <property type="match status" value="1"/>
</dbReference>
<dbReference type="InterPro" id="IPR002222">
    <property type="entry name" value="Ribosomal_uS19"/>
</dbReference>
<dbReference type="InterPro" id="IPR005732">
    <property type="entry name" value="Ribosomal_uS19_bac-type"/>
</dbReference>
<dbReference type="InterPro" id="IPR020934">
    <property type="entry name" value="Ribosomal_uS19_CS"/>
</dbReference>
<dbReference type="InterPro" id="IPR023575">
    <property type="entry name" value="Ribosomal_uS19_SF"/>
</dbReference>
<dbReference type="NCBIfam" id="TIGR01050">
    <property type="entry name" value="rpsS_bact"/>
    <property type="match status" value="1"/>
</dbReference>
<dbReference type="PANTHER" id="PTHR11880">
    <property type="entry name" value="RIBOSOMAL PROTEIN S19P FAMILY MEMBER"/>
    <property type="match status" value="1"/>
</dbReference>
<dbReference type="PANTHER" id="PTHR11880:SF8">
    <property type="entry name" value="SMALL RIBOSOMAL SUBUNIT PROTEIN US19M"/>
    <property type="match status" value="1"/>
</dbReference>
<dbReference type="Pfam" id="PF00203">
    <property type="entry name" value="Ribosomal_S19"/>
    <property type="match status" value="1"/>
</dbReference>
<dbReference type="PIRSF" id="PIRSF002144">
    <property type="entry name" value="Ribosomal_S19"/>
    <property type="match status" value="1"/>
</dbReference>
<dbReference type="PRINTS" id="PR00975">
    <property type="entry name" value="RIBOSOMALS19"/>
</dbReference>
<dbReference type="SUPFAM" id="SSF54570">
    <property type="entry name" value="Ribosomal protein S19"/>
    <property type="match status" value="1"/>
</dbReference>
<dbReference type="PROSITE" id="PS00323">
    <property type="entry name" value="RIBOSOMAL_S19"/>
    <property type="match status" value="1"/>
</dbReference>
<accession>Q3J8R8</accession>
<comment type="function">
    <text evidence="1">Protein S19 forms a complex with S13 that binds strongly to the 16S ribosomal RNA.</text>
</comment>
<comment type="similarity">
    <text evidence="1">Belongs to the universal ribosomal protein uS19 family.</text>
</comment>
<evidence type="ECO:0000255" key="1">
    <source>
        <dbReference type="HAMAP-Rule" id="MF_00531"/>
    </source>
</evidence>
<evidence type="ECO:0000305" key="2"/>
<gene>
    <name evidence="1" type="primary">rpsS</name>
    <name type="ordered locus">Noc_2320</name>
</gene>
<proteinExistence type="inferred from homology"/>
<sequence length="90" mass="10150">MPRSIKKGPFVDPHLQKKVLEASASQSRRPIKTWSRRSMVVPEMIGLTIAVHNGRQHVPILVTENMVGHKLGEFSPTRTFKGHVANKKSR</sequence>
<keyword id="KW-1185">Reference proteome</keyword>
<keyword id="KW-0687">Ribonucleoprotein</keyword>
<keyword id="KW-0689">Ribosomal protein</keyword>
<keyword id="KW-0694">RNA-binding</keyword>
<keyword id="KW-0699">rRNA-binding</keyword>
<organism>
    <name type="scientific">Nitrosococcus oceani (strain ATCC 19707 / BCRC 17464 / JCM 30415 / NCIMB 11848 / C-107)</name>
    <dbReference type="NCBI Taxonomy" id="323261"/>
    <lineage>
        <taxon>Bacteria</taxon>
        <taxon>Pseudomonadati</taxon>
        <taxon>Pseudomonadota</taxon>
        <taxon>Gammaproteobacteria</taxon>
        <taxon>Chromatiales</taxon>
        <taxon>Chromatiaceae</taxon>
        <taxon>Nitrosococcus</taxon>
    </lineage>
</organism>
<feature type="chain" id="PRO_0000265391" description="Small ribosomal subunit protein uS19">
    <location>
        <begin position="1"/>
        <end position="90"/>
    </location>
</feature>
<name>RS19_NITOC</name>
<protein>
    <recommendedName>
        <fullName evidence="1">Small ribosomal subunit protein uS19</fullName>
    </recommendedName>
    <alternativeName>
        <fullName evidence="2">30S ribosomal protein S19</fullName>
    </alternativeName>
</protein>
<reference key="1">
    <citation type="journal article" date="2006" name="Appl. Environ. Microbiol.">
        <title>Complete genome sequence of the marine, chemolithoautotrophic, ammonia-oxidizing bacterium Nitrosococcus oceani ATCC 19707.</title>
        <authorList>
            <person name="Klotz M.G."/>
            <person name="Arp D.J."/>
            <person name="Chain P.S.G."/>
            <person name="El-Sheikh A.F."/>
            <person name="Hauser L.J."/>
            <person name="Hommes N.G."/>
            <person name="Larimer F.W."/>
            <person name="Malfatti S.A."/>
            <person name="Norton J.M."/>
            <person name="Poret-Peterson A.T."/>
            <person name="Vergez L.M."/>
            <person name="Ward B.B."/>
        </authorList>
    </citation>
    <scope>NUCLEOTIDE SEQUENCE [LARGE SCALE GENOMIC DNA]</scope>
    <source>
        <strain>ATCC 19707 / BCRC 17464 / JCM 30415 / NCIMB 11848 / C-107</strain>
    </source>
</reference>